<dbReference type="EMBL" id="BX572603">
    <property type="protein sequence ID" value="CAE28676.1"/>
    <property type="molecule type" value="Genomic_DNA"/>
</dbReference>
<dbReference type="RefSeq" id="WP_011158780.1">
    <property type="nucleotide sequence ID" value="NZ_CP116810.1"/>
</dbReference>
<dbReference type="SMR" id="Q6N4U8"/>
<dbReference type="IntAct" id="Q6N4U8">
    <property type="interactions" value="1"/>
</dbReference>
<dbReference type="STRING" id="258594.RPA3235"/>
<dbReference type="GeneID" id="66894321"/>
<dbReference type="eggNOG" id="COG0097">
    <property type="taxonomic scope" value="Bacteria"/>
</dbReference>
<dbReference type="HOGENOM" id="CLU_065464_1_2_5"/>
<dbReference type="PhylomeDB" id="Q6N4U8"/>
<dbReference type="GO" id="GO:0022625">
    <property type="term" value="C:cytosolic large ribosomal subunit"/>
    <property type="evidence" value="ECO:0007669"/>
    <property type="project" value="TreeGrafter"/>
</dbReference>
<dbReference type="GO" id="GO:0019843">
    <property type="term" value="F:rRNA binding"/>
    <property type="evidence" value="ECO:0007669"/>
    <property type="project" value="UniProtKB-UniRule"/>
</dbReference>
<dbReference type="GO" id="GO:0003735">
    <property type="term" value="F:structural constituent of ribosome"/>
    <property type="evidence" value="ECO:0007669"/>
    <property type="project" value="InterPro"/>
</dbReference>
<dbReference type="GO" id="GO:0002181">
    <property type="term" value="P:cytoplasmic translation"/>
    <property type="evidence" value="ECO:0007669"/>
    <property type="project" value="TreeGrafter"/>
</dbReference>
<dbReference type="FunFam" id="3.90.930.12:FF:000001">
    <property type="entry name" value="50S ribosomal protein L6"/>
    <property type="match status" value="1"/>
</dbReference>
<dbReference type="FunFam" id="3.90.930.12:FF:000002">
    <property type="entry name" value="50S ribosomal protein L6"/>
    <property type="match status" value="1"/>
</dbReference>
<dbReference type="Gene3D" id="3.90.930.12">
    <property type="entry name" value="Ribosomal protein L6, alpha-beta domain"/>
    <property type="match status" value="2"/>
</dbReference>
<dbReference type="HAMAP" id="MF_01365_B">
    <property type="entry name" value="Ribosomal_uL6_B"/>
    <property type="match status" value="1"/>
</dbReference>
<dbReference type="InterPro" id="IPR000702">
    <property type="entry name" value="Ribosomal_uL6-like"/>
</dbReference>
<dbReference type="InterPro" id="IPR036789">
    <property type="entry name" value="Ribosomal_uL6-like_a/b-dom_sf"/>
</dbReference>
<dbReference type="InterPro" id="IPR020040">
    <property type="entry name" value="Ribosomal_uL6_a/b-dom"/>
</dbReference>
<dbReference type="InterPro" id="IPR019906">
    <property type="entry name" value="Ribosomal_uL6_bac-type"/>
</dbReference>
<dbReference type="InterPro" id="IPR002358">
    <property type="entry name" value="Ribosomal_uL6_CS"/>
</dbReference>
<dbReference type="NCBIfam" id="TIGR03654">
    <property type="entry name" value="L6_bact"/>
    <property type="match status" value="1"/>
</dbReference>
<dbReference type="PANTHER" id="PTHR11655">
    <property type="entry name" value="60S/50S RIBOSOMAL PROTEIN L6/L9"/>
    <property type="match status" value="1"/>
</dbReference>
<dbReference type="PANTHER" id="PTHR11655:SF14">
    <property type="entry name" value="LARGE RIBOSOMAL SUBUNIT PROTEIN UL6M"/>
    <property type="match status" value="1"/>
</dbReference>
<dbReference type="Pfam" id="PF00347">
    <property type="entry name" value="Ribosomal_L6"/>
    <property type="match status" value="2"/>
</dbReference>
<dbReference type="PIRSF" id="PIRSF002162">
    <property type="entry name" value="Ribosomal_L6"/>
    <property type="match status" value="1"/>
</dbReference>
<dbReference type="PRINTS" id="PR00059">
    <property type="entry name" value="RIBOSOMALL6"/>
</dbReference>
<dbReference type="SUPFAM" id="SSF56053">
    <property type="entry name" value="Ribosomal protein L6"/>
    <property type="match status" value="2"/>
</dbReference>
<dbReference type="PROSITE" id="PS00525">
    <property type="entry name" value="RIBOSOMAL_L6_1"/>
    <property type="match status" value="1"/>
</dbReference>
<gene>
    <name evidence="1" type="primary">rplF</name>
    <name type="ordered locus">RPA3235</name>
</gene>
<reference key="1">
    <citation type="journal article" date="2004" name="Nat. Biotechnol.">
        <title>Complete genome sequence of the metabolically versatile photosynthetic bacterium Rhodopseudomonas palustris.</title>
        <authorList>
            <person name="Larimer F.W."/>
            <person name="Chain P."/>
            <person name="Hauser L."/>
            <person name="Lamerdin J.E."/>
            <person name="Malfatti S."/>
            <person name="Do L."/>
            <person name="Land M.L."/>
            <person name="Pelletier D.A."/>
            <person name="Beatty J.T."/>
            <person name="Lang A.S."/>
            <person name="Tabita F.R."/>
            <person name="Gibson J.L."/>
            <person name="Hanson T.E."/>
            <person name="Bobst C."/>
            <person name="Torres y Torres J.L."/>
            <person name="Peres C."/>
            <person name="Harrison F.H."/>
            <person name="Gibson J."/>
            <person name="Harwood C.S."/>
        </authorList>
    </citation>
    <scope>NUCLEOTIDE SEQUENCE [LARGE SCALE GENOMIC DNA]</scope>
    <source>
        <strain>ATCC BAA-98 / CGA009</strain>
    </source>
</reference>
<reference key="2">
    <citation type="journal article" date="2004" name="J. Proteome Res.">
        <title>Characterization of the 70S ribosome from Rhodopseudomonas palustris using an integrated 'top-down' and 'bottom-up' mass spectrometric approach.</title>
        <authorList>
            <person name="Strader M.B."/>
            <person name="VerBerkmoes N.C."/>
            <person name="Tabb D.L."/>
            <person name="Connelly H.M."/>
            <person name="Barton J.W."/>
            <person name="Bruce B.D."/>
            <person name="Pelletier D.A."/>
            <person name="Davison B.H."/>
            <person name="Hettich R.L."/>
            <person name="Larimer F.W."/>
            <person name="Hurst G.B."/>
        </authorList>
    </citation>
    <scope>MASS SPECTROMETRY</scope>
    <source>
        <strain>ATCC BAA-98 / CGA009</strain>
    </source>
</reference>
<feature type="initiator methionine" description="Removed">
    <location>
        <position position="1"/>
    </location>
</feature>
<feature type="chain" id="PRO_0000223970" description="Large ribosomal subunit protein uL6">
    <location>
        <begin position="2"/>
        <end position="177"/>
    </location>
</feature>
<comment type="function">
    <text evidence="1">This protein binds to the 23S rRNA, and is important in its secondary structure. It is located near the subunit interface in the base of the L7/L12 stalk, and near the tRNA binding site of the peptidyltransferase center.</text>
</comment>
<comment type="subunit">
    <text evidence="1">Part of the 50S ribosomal subunit.</text>
</comment>
<comment type="mass spectrometry"/>
<comment type="similarity">
    <text evidence="1">Belongs to the universal ribosomal protein uL6 family.</text>
</comment>
<accession>Q6N4U8</accession>
<protein>
    <recommendedName>
        <fullName evidence="1">Large ribosomal subunit protein uL6</fullName>
    </recommendedName>
    <alternativeName>
        <fullName evidence="3">50S ribosomal protein L6</fullName>
    </alternativeName>
    <alternativeName>
        <fullName>RRP-L6</fullName>
    </alternativeName>
</protein>
<organism>
    <name type="scientific">Rhodopseudomonas palustris (strain ATCC BAA-98 / CGA009)</name>
    <dbReference type="NCBI Taxonomy" id="258594"/>
    <lineage>
        <taxon>Bacteria</taxon>
        <taxon>Pseudomonadati</taxon>
        <taxon>Pseudomonadota</taxon>
        <taxon>Alphaproteobacteria</taxon>
        <taxon>Hyphomicrobiales</taxon>
        <taxon>Nitrobacteraceae</taxon>
        <taxon>Rhodopseudomonas</taxon>
    </lineage>
</organism>
<keyword id="KW-0687">Ribonucleoprotein</keyword>
<keyword id="KW-0689">Ribosomal protein</keyword>
<keyword id="KW-0694">RNA-binding</keyword>
<keyword id="KW-0699">rRNA-binding</keyword>
<evidence type="ECO:0000255" key="1">
    <source>
        <dbReference type="HAMAP-Rule" id="MF_01365"/>
    </source>
</evidence>
<evidence type="ECO:0000269" key="2">
    <source>
    </source>
</evidence>
<evidence type="ECO:0000305" key="3"/>
<proteinExistence type="evidence at protein level"/>
<sequence>MSRVGKKPVTVPSGVTATVEGQTVKMKGPKGQLQFVVHDDVDVKFEDGAVKVAPRHETNRARALYGTARAQIANLVEGVTKGFEKKLEITGVGYRAAMQGKKLQLALGYSHDVLYDIPEGITITVPKPTEINVVGIDPQKVGQVAAEIRDYRPPEPYKGKGVRYADEFIFRKEGKKK</sequence>
<name>RL6_RHOPA</name>